<name>MRAZ_SHEAM</name>
<gene>
    <name evidence="1" type="primary">mraZ</name>
    <name type="ordered locus">Sama_0345</name>
</gene>
<sequence length="152" mass="17202">MFKGASAINLDAKGRIAIPTRYREPLLSAHEGKLVITVDIQANCLLIYPADEWSLIEAKLLKLSDTQPTERALKRMLLGYAHEIEMDSNGRLLLPPPLRQYAQLDKKAMLVGQLNKFELWDEAQWQAQIQSAQDVIRSEDLAANERLADFSL</sequence>
<protein>
    <recommendedName>
        <fullName>Transcriptional regulator MraZ</fullName>
    </recommendedName>
</protein>
<reference key="1">
    <citation type="submission" date="2006-12" db="EMBL/GenBank/DDBJ databases">
        <title>Complete sequence of Shewanella amazonensis SB2B.</title>
        <authorList>
            <consortium name="US DOE Joint Genome Institute"/>
            <person name="Copeland A."/>
            <person name="Lucas S."/>
            <person name="Lapidus A."/>
            <person name="Barry K."/>
            <person name="Detter J.C."/>
            <person name="Glavina del Rio T."/>
            <person name="Hammon N."/>
            <person name="Israni S."/>
            <person name="Dalin E."/>
            <person name="Tice H."/>
            <person name="Pitluck S."/>
            <person name="Munk A.C."/>
            <person name="Brettin T."/>
            <person name="Bruce D."/>
            <person name="Han C."/>
            <person name="Tapia R."/>
            <person name="Gilna P."/>
            <person name="Schmutz J."/>
            <person name="Larimer F."/>
            <person name="Land M."/>
            <person name="Hauser L."/>
            <person name="Kyrpides N."/>
            <person name="Mikhailova N."/>
            <person name="Fredrickson J."/>
            <person name="Richardson P."/>
        </authorList>
    </citation>
    <scope>NUCLEOTIDE SEQUENCE [LARGE SCALE GENOMIC DNA]</scope>
    <source>
        <strain>ATCC BAA-1098 / SB2B</strain>
    </source>
</reference>
<comment type="subunit">
    <text evidence="1">Forms oligomers.</text>
</comment>
<comment type="subcellular location">
    <subcellularLocation>
        <location evidence="1">Cytoplasm</location>
        <location evidence="1">Nucleoid</location>
    </subcellularLocation>
</comment>
<comment type="similarity">
    <text evidence="1">Belongs to the MraZ family.</text>
</comment>
<evidence type="ECO:0000255" key="1">
    <source>
        <dbReference type="HAMAP-Rule" id="MF_01008"/>
    </source>
</evidence>
<evidence type="ECO:0000255" key="2">
    <source>
        <dbReference type="PROSITE-ProRule" id="PRU01076"/>
    </source>
</evidence>
<dbReference type="EMBL" id="CP000507">
    <property type="protein sequence ID" value="ABL98556.1"/>
    <property type="molecule type" value="Genomic_DNA"/>
</dbReference>
<dbReference type="RefSeq" id="WP_011758466.1">
    <property type="nucleotide sequence ID" value="NC_008700.1"/>
</dbReference>
<dbReference type="SMR" id="A1S2F0"/>
<dbReference type="STRING" id="326297.Sama_0345"/>
<dbReference type="KEGG" id="saz:Sama_0345"/>
<dbReference type="eggNOG" id="COG2001">
    <property type="taxonomic scope" value="Bacteria"/>
</dbReference>
<dbReference type="HOGENOM" id="CLU_107907_2_0_6"/>
<dbReference type="OrthoDB" id="9807753at2"/>
<dbReference type="Proteomes" id="UP000009175">
    <property type="component" value="Chromosome"/>
</dbReference>
<dbReference type="GO" id="GO:0005737">
    <property type="term" value="C:cytoplasm"/>
    <property type="evidence" value="ECO:0007669"/>
    <property type="project" value="UniProtKB-UniRule"/>
</dbReference>
<dbReference type="GO" id="GO:0009295">
    <property type="term" value="C:nucleoid"/>
    <property type="evidence" value="ECO:0007669"/>
    <property type="project" value="UniProtKB-SubCell"/>
</dbReference>
<dbReference type="GO" id="GO:0003700">
    <property type="term" value="F:DNA-binding transcription factor activity"/>
    <property type="evidence" value="ECO:0007669"/>
    <property type="project" value="UniProtKB-UniRule"/>
</dbReference>
<dbReference type="GO" id="GO:0000976">
    <property type="term" value="F:transcription cis-regulatory region binding"/>
    <property type="evidence" value="ECO:0007669"/>
    <property type="project" value="TreeGrafter"/>
</dbReference>
<dbReference type="GO" id="GO:2000143">
    <property type="term" value="P:negative regulation of DNA-templated transcription initiation"/>
    <property type="evidence" value="ECO:0007669"/>
    <property type="project" value="TreeGrafter"/>
</dbReference>
<dbReference type="CDD" id="cd16321">
    <property type="entry name" value="MraZ_C"/>
    <property type="match status" value="1"/>
</dbReference>
<dbReference type="CDD" id="cd16320">
    <property type="entry name" value="MraZ_N"/>
    <property type="match status" value="1"/>
</dbReference>
<dbReference type="FunFam" id="3.40.1550.20:FF:000001">
    <property type="entry name" value="Transcriptional regulator MraZ"/>
    <property type="match status" value="1"/>
</dbReference>
<dbReference type="Gene3D" id="3.40.1550.20">
    <property type="entry name" value="Transcriptional regulator MraZ domain"/>
    <property type="match status" value="1"/>
</dbReference>
<dbReference type="HAMAP" id="MF_01008">
    <property type="entry name" value="MraZ"/>
    <property type="match status" value="1"/>
</dbReference>
<dbReference type="InterPro" id="IPR003444">
    <property type="entry name" value="MraZ"/>
</dbReference>
<dbReference type="InterPro" id="IPR035644">
    <property type="entry name" value="MraZ_C"/>
</dbReference>
<dbReference type="InterPro" id="IPR020603">
    <property type="entry name" value="MraZ_dom"/>
</dbReference>
<dbReference type="InterPro" id="IPR035642">
    <property type="entry name" value="MraZ_N"/>
</dbReference>
<dbReference type="InterPro" id="IPR038619">
    <property type="entry name" value="MraZ_sf"/>
</dbReference>
<dbReference type="InterPro" id="IPR007159">
    <property type="entry name" value="SpoVT-AbrB_dom"/>
</dbReference>
<dbReference type="InterPro" id="IPR037914">
    <property type="entry name" value="SpoVT-AbrB_sf"/>
</dbReference>
<dbReference type="NCBIfam" id="TIGR00242">
    <property type="entry name" value="division/cell wall cluster transcriptional repressor MraZ"/>
    <property type="match status" value="1"/>
</dbReference>
<dbReference type="PANTHER" id="PTHR34701">
    <property type="entry name" value="TRANSCRIPTIONAL REGULATOR MRAZ"/>
    <property type="match status" value="1"/>
</dbReference>
<dbReference type="PANTHER" id="PTHR34701:SF1">
    <property type="entry name" value="TRANSCRIPTIONAL REGULATOR MRAZ"/>
    <property type="match status" value="1"/>
</dbReference>
<dbReference type="Pfam" id="PF02381">
    <property type="entry name" value="MraZ"/>
    <property type="match status" value="2"/>
</dbReference>
<dbReference type="SUPFAM" id="SSF89447">
    <property type="entry name" value="AbrB/MazE/MraZ-like"/>
    <property type="match status" value="1"/>
</dbReference>
<dbReference type="PROSITE" id="PS51740">
    <property type="entry name" value="SPOVT_ABRB"/>
    <property type="match status" value="2"/>
</dbReference>
<organism>
    <name type="scientific">Shewanella amazonensis (strain ATCC BAA-1098 / SB2B)</name>
    <dbReference type="NCBI Taxonomy" id="326297"/>
    <lineage>
        <taxon>Bacteria</taxon>
        <taxon>Pseudomonadati</taxon>
        <taxon>Pseudomonadota</taxon>
        <taxon>Gammaproteobacteria</taxon>
        <taxon>Alteromonadales</taxon>
        <taxon>Shewanellaceae</taxon>
        <taxon>Shewanella</taxon>
    </lineage>
</organism>
<proteinExistence type="inferred from homology"/>
<accession>A1S2F0</accession>
<keyword id="KW-0963">Cytoplasm</keyword>
<keyword id="KW-0238">DNA-binding</keyword>
<keyword id="KW-1185">Reference proteome</keyword>
<keyword id="KW-0677">Repeat</keyword>
<keyword id="KW-0804">Transcription</keyword>
<keyword id="KW-0805">Transcription regulation</keyword>
<feature type="chain" id="PRO_1000062928" description="Transcriptional regulator MraZ">
    <location>
        <begin position="1"/>
        <end position="152"/>
    </location>
</feature>
<feature type="domain" description="SpoVT-AbrB 1" evidence="2">
    <location>
        <begin position="5"/>
        <end position="52"/>
    </location>
</feature>
<feature type="domain" description="SpoVT-AbrB 2" evidence="2">
    <location>
        <begin position="81"/>
        <end position="124"/>
    </location>
</feature>